<proteinExistence type="inferred from homology"/>
<sequence length="141" mass="16089">MPLQIFNTTKRTIDEALLAEAIQLVIGEEGGKVGSIEAIYCGNKMIRRINRDFLNHDYATDTITFGYNEGGEVEGEFYISLDVIESNARRFGVMFEDELLRVTIHSALHLMGYDDETPELRIAMSRREDLYLDRIRGASNH</sequence>
<feature type="chain" id="PRO_1000089160" description="Endoribonuclease YbeY">
    <location>
        <begin position="1"/>
        <end position="141"/>
    </location>
</feature>
<feature type="binding site" evidence="1">
    <location>
        <position position="105"/>
    </location>
    <ligand>
        <name>Zn(2+)</name>
        <dbReference type="ChEBI" id="CHEBI:29105"/>
        <note>catalytic</note>
    </ligand>
</feature>
<feature type="binding site" evidence="1">
    <location>
        <position position="109"/>
    </location>
    <ligand>
        <name>Zn(2+)</name>
        <dbReference type="ChEBI" id="CHEBI:29105"/>
        <note>catalytic</note>
    </ligand>
</feature>
<feature type="binding site" evidence="1">
    <location>
        <position position="115"/>
    </location>
    <ligand>
        <name>Zn(2+)</name>
        <dbReference type="ChEBI" id="CHEBI:29105"/>
        <note>catalytic</note>
    </ligand>
</feature>
<keyword id="KW-0963">Cytoplasm</keyword>
<keyword id="KW-0255">Endonuclease</keyword>
<keyword id="KW-0378">Hydrolase</keyword>
<keyword id="KW-0479">Metal-binding</keyword>
<keyword id="KW-0540">Nuclease</keyword>
<keyword id="KW-0690">Ribosome biogenesis</keyword>
<keyword id="KW-0698">rRNA processing</keyword>
<keyword id="KW-0862">Zinc</keyword>
<protein>
    <recommendedName>
        <fullName evidence="1">Endoribonuclease YbeY</fullName>
        <ecNumber evidence="1">3.1.-.-</ecNumber>
    </recommendedName>
</protein>
<comment type="function">
    <text evidence="1">Single strand-specific metallo-endoribonuclease involved in late-stage 70S ribosome quality control and in maturation of the 3' terminus of the 16S rRNA.</text>
</comment>
<comment type="cofactor">
    <cofactor evidence="1">
        <name>Zn(2+)</name>
        <dbReference type="ChEBI" id="CHEBI:29105"/>
    </cofactor>
    <text evidence="1">Binds 1 zinc ion.</text>
</comment>
<comment type="subcellular location">
    <subcellularLocation>
        <location evidence="1">Cytoplasm</location>
    </subcellularLocation>
</comment>
<comment type="similarity">
    <text evidence="1">Belongs to the endoribonuclease YbeY family.</text>
</comment>
<reference key="1">
    <citation type="submission" date="2008-06" db="EMBL/GenBank/DDBJ databases">
        <title>Complete sequence of Chlorobaculum parvum NCIB 8327.</title>
        <authorList>
            <consortium name="US DOE Joint Genome Institute"/>
            <person name="Lucas S."/>
            <person name="Copeland A."/>
            <person name="Lapidus A."/>
            <person name="Glavina del Rio T."/>
            <person name="Dalin E."/>
            <person name="Tice H."/>
            <person name="Bruce D."/>
            <person name="Goodwin L."/>
            <person name="Pitluck S."/>
            <person name="Schmutz J."/>
            <person name="Larimer F."/>
            <person name="Land M."/>
            <person name="Hauser L."/>
            <person name="Kyrpides N."/>
            <person name="Mikhailova N."/>
            <person name="Zhao F."/>
            <person name="Li T."/>
            <person name="Liu Z."/>
            <person name="Overmann J."/>
            <person name="Bryant D.A."/>
            <person name="Richardson P."/>
        </authorList>
    </citation>
    <scope>NUCLEOTIDE SEQUENCE [LARGE SCALE GENOMIC DNA]</scope>
    <source>
        <strain>DSM 263 / NCIMB 8327</strain>
    </source>
</reference>
<gene>
    <name evidence="1" type="primary">ybeY</name>
    <name type="ordered locus">Cpar_0779</name>
</gene>
<name>YBEY_CHLP8</name>
<evidence type="ECO:0000255" key="1">
    <source>
        <dbReference type="HAMAP-Rule" id="MF_00009"/>
    </source>
</evidence>
<dbReference type="EC" id="3.1.-.-" evidence="1"/>
<dbReference type="EMBL" id="CP001099">
    <property type="protein sequence ID" value="ACF11195.1"/>
    <property type="molecule type" value="Genomic_DNA"/>
</dbReference>
<dbReference type="RefSeq" id="WP_012502028.1">
    <property type="nucleotide sequence ID" value="NC_011027.1"/>
</dbReference>
<dbReference type="SMR" id="B3QMP2"/>
<dbReference type="STRING" id="517417.Cpar_0779"/>
<dbReference type="KEGG" id="cpc:Cpar_0779"/>
<dbReference type="eggNOG" id="COG0319">
    <property type="taxonomic scope" value="Bacteria"/>
</dbReference>
<dbReference type="HOGENOM" id="CLU_106710_3_3_10"/>
<dbReference type="OrthoDB" id="9811984at2"/>
<dbReference type="Proteomes" id="UP000008811">
    <property type="component" value="Chromosome"/>
</dbReference>
<dbReference type="GO" id="GO:0005737">
    <property type="term" value="C:cytoplasm"/>
    <property type="evidence" value="ECO:0007669"/>
    <property type="project" value="UniProtKB-SubCell"/>
</dbReference>
<dbReference type="GO" id="GO:0004222">
    <property type="term" value="F:metalloendopeptidase activity"/>
    <property type="evidence" value="ECO:0007669"/>
    <property type="project" value="InterPro"/>
</dbReference>
<dbReference type="GO" id="GO:0004521">
    <property type="term" value="F:RNA endonuclease activity"/>
    <property type="evidence" value="ECO:0007669"/>
    <property type="project" value="UniProtKB-UniRule"/>
</dbReference>
<dbReference type="GO" id="GO:0008270">
    <property type="term" value="F:zinc ion binding"/>
    <property type="evidence" value="ECO:0007669"/>
    <property type="project" value="UniProtKB-UniRule"/>
</dbReference>
<dbReference type="GO" id="GO:0006364">
    <property type="term" value="P:rRNA processing"/>
    <property type="evidence" value="ECO:0007669"/>
    <property type="project" value="UniProtKB-UniRule"/>
</dbReference>
<dbReference type="Gene3D" id="3.40.390.30">
    <property type="entry name" value="Metalloproteases ('zincins'), catalytic domain"/>
    <property type="match status" value="1"/>
</dbReference>
<dbReference type="HAMAP" id="MF_00009">
    <property type="entry name" value="Endoribonucl_YbeY"/>
    <property type="match status" value="1"/>
</dbReference>
<dbReference type="InterPro" id="IPR023091">
    <property type="entry name" value="MetalPrtase_cat_dom_sf_prd"/>
</dbReference>
<dbReference type="InterPro" id="IPR002036">
    <property type="entry name" value="YbeY"/>
</dbReference>
<dbReference type="InterPro" id="IPR020549">
    <property type="entry name" value="YbeY_CS"/>
</dbReference>
<dbReference type="NCBIfam" id="TIGR00043">
    <property type="entry name" value="rRNA maturation RNase YbeY"/>
    <property type="match status" value="1"/>
</dbReference>
<dbReference type="PANTHER" id="PTHR46986">
    <property type="entry name" value="ENDORIBONUCLEASE YBEY, CHLOROPLASTIC"/>
    <property type="match status" value="1"/>
</dbReference>
<dbReference type="PANTHER" id="PTHR46986:SF1">
    <property type="entry name" value="ENDORIBONUCLEASE YBEY, CHLOROPLASTIC"/>
    <property type="match status" value="1"/>
</dbReference>
<dbReference type="Pfam" id="PF02130">
    <property type="entry name" value="YbeY"/>
    <property type="match status" value="1"/>
</dbReference>
<dbReference type="SUPFAM" id="SSF55486">
    <property type="entry name" value="Metalloproteases ('zincins'), catalytic domain"/>
    <property type="match status" value="1"/>
</dbReference>
<dbReference type="PROSITE" id="PS01306">
    <property type="entry name" value="UPF0054"/>
    <property type="match status" value="1"/>
</dbReference>
<accession>B3QMP2</accession>
<organism>
    <name type="scientific">Chlorobaculum parvum (strain DSM 263 / NCIMB 8327)</name>
    <name type="common">Chlorobium vibrioforme subsp. thiosulfatophilum</name>
    <dbReference type="NCBI Taxonomy" id="517417"/>
    <lineage>
        <taxon>Bacteria</taxon>
        <taxon>Pseudomonadati</taxon>
        <taxon>Chlorobiota</taxon>
        <taxon>Chlorobiia</taxon>
        <taxon>Chlorobiales</taxon>
        <taxon>Chlorobiaceae</taxon>
        <taxon>Chlorobaculum</taxon>
    </lineage>
</organism>